<evidence type="ECO:0000250" key="1"/>
<evidence type="ECO:0000305" key="2"/>
<reference key="1">
    <citation type="journal article" date="2006" name="J. Bacteriol.">
        <title>The Methanosarcina barkeri genome: comparative analysis with Methanosarcina acetivorans and Methanosarcina mazei reveals extensive rearrangement within methanosarcinal genomes.</title>
        <authorList>
            <person name="Maeder D.L."/>
            <person name="Anderson I."/>
            <person name="Brettin T.S."/>
            <person name="Bruce D.C."/>
            <person name="Gilna P."/>
            <person name="Han C.S."/>
            <person name="Lapidus A."/>
            <person name="Metcalf W.W."/>
            <person name="Saunders E."/>
            <person name="Tapia R."/>
            <person name="Sowers K.R."/>
        </authorList>
    </citation>
    <scope>NUCLEOTIDE SEQUENCE [LARGE SCALE GENOMIC DNA]</scope>
    <source>
        <strain>Fusaro / DSM 804</strain>
    </source>
</reference>
<gene>
    <name type="primary">mtmB3</name>
    <name type="ordered locus">Mbar_A3633</name>
</gene>
<comment type="function">
    <text evidence="1">Catalyzes the transfer of the methyl group from monomethylamine to the corrinoid cofactor of MtmC.</text>
</comment>
<comment type="catalytic activity">
    <reaction>
        <text>Co(I)-[methylamine-specific corrinoid protein] + methylamine + H(+) = methyl-Co(III)-[methylamine-specific corrinoid protein] + NH4(+)</text>
        <dbReference type="Rhea" id="RHEA:26059"/>
        <dbReference type="Rhea" id="RHEA-COMP:11120"/>
        <dbReference type="Rhea" id="RHEA-COMP:11121"/>
        <dbReference type="ChEBI" id="CHEBI:15378"/>
        <dbReference type="ChEBI" id="CHEBI:28938"/>
        <dbReference type="ChEBI" id="CHEBI:59338"/>
        <dbReference type="ChEBI" id="CHEBI:85033"/>
        <dbReference type="ChEBI" id="CHEBI:85035"/>
        <dbReference type="EC" id="2.1.1.248"/>
    </reaction>
</comment>
<comment type="pathway">
    <text>One-carbon metabolism; methanogenesis from methylamine.</text>
</comment>
<comment type="similarity">
    <text evidence="2">Belongs to the monomethylamine methyltransferase family.</text>
</comment>
<organism>
    <name type="scientific">Methanosarcina barkeri (strain Fusaro / DSM 804)</name>
    <dbReference type="NCBI Taxonomy" id="269797"/>
    <lineage>
        <taxon>Archaea</taxon>
        <taxon>Methanobacteriati</taxon>
        <taxon>Methanobacteriota</taxon>
        <taxon>Stenosarchaea group</taxon>
        <taxon>Methanomicrobia</taxon>
        <taxon>Methanosarcinales</taxon>
        <taxon>Methanosarcinaceae</taxon>
        <taxon>Methanosarcina</taxon>
    </lineage>
</organism>
<protein>
    <recommendedName>
        <fullName>Monomethylamine methyltransferase MtmB3</fullName>
        <shortName>MMA methyltransferase 3</shortName>
        <shortName>MMAMT 3</shortName>
        <ecNumber>2.1.1.248</ecNumber>
    </recommendedName>
</protein>
<name>MTMB3_METBF</name>
<sequence>MTFRKSFDCYDFYDRAKVGEKCTLDDWDLMRIPMKAMELKQKYGLDFKGEFIPTDKDMMEKLFKAGFEMLLECGIYCTDTHRIVKYTEDEIWDAINNAQKEFVLGTGRDAVNVRKRSVGDKAKPIVQGGPTGSPISEDVFMPVHMSYALEKEVDTIVNGVMTTVRGKAPVPKSPYEVLAAKTETRLIKNACAMAGRPGMGVOGPETSLSAQGNISADCAGGMTCTDSHEVSQLCELKIDLDAISVIAHYNGNSDIIMDEQMPIFGGYAGGIEETTIVNIATHINSLVMSNASWHLDGPVHIRWGSTNTRETLTIAGWACATISEFTDILSGNQYYPCAGPCTEMCLLEASAQSITDTASGREILSGVASAKGVVTDKTTGMEARMMGEVARATAGVEISEVNVILDKLVALYEKNYASAPAGKTFQECYDVKTVTPTEEYMQVYDGARKKLEDLGLVF</sequence>
<keyword id="KW-0484">Methanogenesis</keyword>
<keyword id="KW-0489">Methyltransferase</keyword>
<keyword id="KW-0669">Pyrrolysine</keyword>
<keyword id="KW-0808">Transferase</keyword>
<accession>P0C0W4</accession>
<feature type="initiator methionine" description="Removed" evidence="1">
    <location>
        <position position="1"/>
    </location>
</feature>
<feature type="chain" id="PRO_0000216554" description="Monomethylamine methyltransferase MtmB3">
    <location>
        <begin position="2"/>
        <end position="458"/>
    </location>
</feature>
<feature type="non-standard amino acid" description="Pyrrolysine" evidence="1">
    <location>
        <position position="202"/>
    </location>
</feature>
<dbReference type="EC" id="2.1.1.248"/>
<dbReference type="EMBL" id="CP000099">
    <property type="status" value="NOT_ANNOTATED_CDS"/>
    <property type="molecule type" value="Genomic_DNA"/>
</dbReference>
<dbReference type="UniPathway" id="UPA00643"/>
<dbReference type="GO" id="GO:0043852">
    <property type="term" value="F:monomethylamine methyltransferase activity"/>
    <property type="evidence" value="ECO:0000314"/>
    <property type="project" value="MENGO"/>
</dbReference>
<dbReference type="GO" id="GO:0015948">
    <property type="term" value="P:methanogenesis"/>
    <property type="evidence" value="ECO:0007669"/>
    <property type="project" value="UniProtKB-KW"/>
</dbReference>
<dbReference type="GO" id="GO:0032259">
    <property type="term" value="P:methylation"/>
    <property type="evidence" value="ECO:0007669"/>
    <property type="project" value="UniProtKB-KW"/>
</dbReference>
<dbReference type="FunFam" id="3.20.20.460:FF:000001">
    <property type="entry name" value="Monomethylamine methyltransferase MtmB1"/>
    <property type="match status" value="1"/>
</dbReference>
<dbReference type="Gene3D" id="3.20.20.460">
    <property type="entry name" value="Monomethylamine methyltransferase MtmB"/>
    <property type="match status" value="1"/>
</dbReference>
<dbReference type="InterPro" id="IPR008031">
    <property type="entry name" value="MtmB_MeTrfase"/>
</dbReference>
<dbReference type="InterPro" id="IPR036655">
    <property type="entry name" value="MtmB_sf"/>
</dbReference>
<dbReference type="Pfam" id="PF05369">
    <property type="entry name" value="MtmB"/>
    <property type="match status" value="1"/>
</dbReference>
<dbReference type="SUPFAM" id="SSF75098">
    <property type="entry name" value="Monomethylamine methyltransferase MtmB"/>
    <property type="match status" value="1"/>
</dbReference>
<proteinExistence type="inferred from homology"/>